<evidence type="ECO:0000255" key="1">
    <source>
        <dbReference type="HAMAP-Rule" id="MF_00453"/>
    </source>
</evidence>
<proteinExistence type="inferred from homology"/>
<comment type="function">
    <text evidence="1">Involved in the gluconeogenesis. Catalyzes the conversion of oxaloacetate (OAA) to phosphoenolpyruvate (PEP) through direct phosphoryl transfer between the nucleoside triphosphate and OAA.</text>
</comment>
<comment type="catalytic activity">
    <reaction evidence="1">
        <text>oxaloacetate + ATP = phosphoenolpyruvate + ADP + CO2</text>
        <dbReference type="Rhea" id="RHEA:18617"/>
        <dbReference type="ChEBI" id="CHEBI:16452"/>
        <dbReference type="ChEBI" id="CHEBI:16526"/>
        <dbReference type="ChEBI" id="CHEBI:30616"/>
        <dbReference type="ChEBI" id="CHEBI:58702"/>
        <dbReference type="ChEBI" id="CHEBI:456216"/>
        <dbReference type="EC" id="4.1.1.49"/>
    </reaction>
</comment>
<comment type="cofactor">
    <cofactor evidence="1">
        <name>Mn(2+)</name>
        <dbReference type="ChEBI" id="CHEBI:29035"/>
    </cofactor>
    <text evidence="1">Binds 1 Mn(2+) ion per subunit.</text>
</comment>
<comment type="pathway">
    <text evidence="1">Carbohydrate biosynthesis; gluconeogenesis.</text>
</comment>
<comment type="subcellular location">
    <subcellularLocation>
        <location evidence="1">Cytoplasm</location>
    </subcellularLocation>
</comment>
<comment type="similarity">
    <text evidence="1">Belongs to the phosphoenolpyruvate carboxykinase (ATP) family.</text>
</comment>
<reference key="1">
    <citation type="journal article" date="2001" name="Science">
        <title>The genome of the natural genetic engineer Agrobacterium tumefaciens C58.</title>
        <authorList>
            <person name="Wood D.W."/>
            <person name="Setubal J.C."/>
            <person name="Kaul R."/>
            <person name="Monks D.E."/>
            <person name="Kitajima J.P."/>
            <person name="Okura V.K."/>
            <person name="Zhou Y."/>
            <person name="Chen L."/>
            <person name="Wood G.E."/>
            <person name="Almeida N.F. Jr."/>
            <person name="Woo L."/>
            <person name="Chen Y."/>
            <person name="Paulsen I.T."/>
            <person name="Eisen J.A."/>
            <person name="Karp P.D."/>
            <person name="Bovee D. Sr."/>
            <person name="Chapman P."/>
            <person name="Clendenning J."/>
            <person name="Deatherage G."/>
            <person name="Gillet W."/>
            <person name="Grant C."/>
            <person name="Kutyavin T."/>
            <person name="Levy R."/>
            <person name="Li M.-J."/>
            <person name="McClelland E."/>
            <person name="Palmieri A."/>
            <person name="Raymond C."/>
            <person name="Rouse G."/>
            <person name="Saenphimmachak C."/>
            <person name="Wu Z."/>
            <person name="Romero P."/>
            <person name="Gordon D."/>
            <person name="Zhang S."/>
            <person name="Yoo H."/>
            <person name="Tao Y."/>
            <person name="Biddle P."/>
            <person name="Jung M."/>
            <person name="Krespan W."/>
            <person name="Perry M."/>
            <person name="Gordon-Kamm B."/>
            <person name="Liao L."/>
            <person name="Kim S."/>
            <person name="Hendrick C."/>
            <person name="Zhao Z.-Y."/>
            <person name="Dolan M."/>
            <person name="Chumley F."/>
            <person name="Tingey S.V."/>
            <person name="Tomb J.-F."/>
            <person name="Gordon M.P."/>
            <person name="Olson M.V."/>
            <person name="Nester E.W."/>
        </authorList>
    </citation>
    <scope>NUCLEOTIDE SEQUENCE [LARGE SCALE GENOMIC DNA]</scope>
    <source>
        <strain>C58 / ATCC 33970</strain>
    </source>
</reference>
<reference key="2">
    <citation type="journal article" date="2001" name="Science">
        <title>Genome sequence of the plant pathogen and biotechnology agent Agrobacterium tumefaciens C58.</title>
        <authorList>
            <person name="Goodner B."/>
            <person name="Hinkle G."/>
            <person name="Gattung S."/>
            <person name="Miller N."/>
            <person name="Blanchard M."/>
            <person name="Qurollo B."/>
            <person name="Goldman B.S."/>
            <person name="Cao Y."/>
            <person name="Askenazi M."/>
            <person name="Halling C."/>
            <person name="Mullin L."/>
            <person name="Houmiel K."/>
            <person name="Gordon J."/>
            <person name="Vaudin M."/>
            <person name="Iartchouk O."/>
            <person name="Epp A."/>
            <person name="Liu F."/>
            <person name="Wollam C."/>
            <person name="Allinger M."/>
            <person name="Doughty D."/>
            <person name="Scott C."/>
            <person name="Lappas C."/>
            <person name="Markelz B."/>
            <person name="Flanagan C."/>
            <person name="Crowell C."/>
            <person name="Gurson J."/>
            <person name="Lomo C."/>
            <person name="Sear C."/>
            <person name="Strub G."/>
            <person name="Cielo C."/>
            <person name="Slater S."/>
        </authorList>
    </citation>
    <scope>NUCLEOTIDE SEQUENCE [LARGE SCALE GENOMIC DNA]</scope>
    <source>
        <strain>C58 / ATCC 33970</strain>
    </source>
</reference>
<protein>
    <recommendedName>
        <fullName evidence="1">Phosphoenolpyruvate carboxykinase (ATP)</fullName>
        <shortName evidence="1">PCK</shortName>
        <shortName evidence="1">PEP carboxykinase</shortName>
        <shortName evidence="1">PEPCK</shortName>
        <ecNumber evidence="1">4.1.1.49</ecNumber>
    </recommendedName>
</protein>
<organism>
    <name type="scientific">Agrobacterium fabrum (strain C58 / ATCC 33970)</name>
    <name type="common">Agrobacterium tumefaciens (strain C58)</name>
    <dbReference type="NCBI Taxonomy" id="176299"/>
    <lineage>
        <taxon>Bacteria</taxon>
        <taxon>Pseudomonadati</taxon>
        <taxon>Pseudomonadota</taxon>
        <taxon>Alphaproteobacteria</taxon>
        <taxon>Hyphomicrobiales</taxon>
        <taxon>Rhizobiaceae</taxon>
        <taxon>Rhizobium/Agrobacterium group</taxon>
        <taxon>Agrobacterium</taxon>
        <taxon>Agrobacterium tumefaciens complex</taxon>
    </lineage>
</organism>
<feature type="chain" id="PRO_0000203800" description="Phosphoenolpyruvate carboxykinase (ATP)">
    <location>
        <begin position="1"/>
        <end position="536"/>
    </location>
</feature>
<feature type="binding site" evidence="1">
    <location>
        <position position="61"/>
    </location>
    <ligand>
        <name>substrate</name>
    </ligand>
</feature>
<feature type="binding site" evidence="1">
    <location>
        <position position="195"/>
    </location>
    <ligand>
        <name>substrate</name>
    </ligand>
</feature>
<feature type="binding site" evidence="1">
    <location>
        <position position="201"/>
    </location>
    <ligand>
        <name>ATP</name>
        <dbReference type="ChEBI" id="CHEBI:30616"/>
    </ligand>
</feature>
<feature type="binding site" evidence="1">
    <location>
        <position position="201"/>
    </location>
    <ligand>
        <name>Mn(2+)</name>
        <dbReference type="ChEBI" id="CHEBI:29035"/>
    </ligand>
</feature>
<feature type="binding site" evidence="1">
    <location>
        <position position="201"/>
    </location>
    <ligand>
        <name>substrate</name>
    </ligand>
</feature>
<feature type="binding site" evidence="1">
    <location>
        <position position="220"/>
    </location>
    <ligand>
        <name>ATP</name>
        <dbReference type="ChEBI" id="CHEBI:30616"/>
    </ligand>
</feature>
<feature type="binding site" evidence="1">
    <location>
        <position position="220"/>
    </location>
    <ligand>
        <name>Mn(2+)</name>
        <dbReference type="ChEBI" id="CHEBI:29035"/>
    </ligand>
</feature>
<feature type="binding site" evidence="1">
    <location>
        <begin position="236"/>
        <end position="244"/>
    </location>
    <ligand>
        <name>ATP</name>
        <dbReference type="ChEBI" id="CHEBI:30616"/>
    </ligand>
</feature>
<feature type="binding site" evidence="1">
    <location>
        <position position="257"/>
    </location>
    <ligand>
        <name>Mn(2+)</name>
        <dbReference type="ChEBI" id="CHEBI:29035"/>
    </ligand>
</feature>
<feature type="binding site" evidence="1">
    <location>
        <position position="285"/>
    </location>
    <ligand>
        <name>ATP</name>
        <dbReference type="ChEBI" id="CHEBI:30616"/>
    </ligand>
</feature>
<feature type="binding site" evidence="1">
    <location>
        <position position="322"/>
    </location>
    <ligand>
        <name>ATP</name>
        <dbReference type="ChEBI" id="CHEBI:30616"/>
    </ligand>
</feature>
<feature type="binding site" evidence="1">
    <location>
        <position position="322"/>
    </location>
    <ligand>
        <name>substrate</name>
    </ligand>
</feature>
<feature type="binding site" evidence="1">
    <location>
        <position position="447"/>
    </location>
    <ligand>
        <name>ATP</name>
        <dbReference type="ChEBI" id="CHEBI:30616"/>
    </ligand>
</feature>
<accession>Q8UJ94</accession>
<gene>
    <name evidence="1" type="primary">pckA</name>
    <name type="ordered locus">Atu0035</name>
    <name type="ORF">AGR_C_56</name>
</gene>
<keyword id="KW-0067">ATP-binding</keyword>
<keyword id="KW-0963">Cytoplasm</keyword>
<keyword id="KW-0210">Decarboxylase</keyword>
<keyword id="KW-0312">Gluconeogenesis</keyword>
<keyword id="KW-0456">Lyase</keyword>
<keyword id="KW-0464">Manganese</keyword>
<keyword id="KW-0479">Metal-binding</keyword>
<keyword id="KW-0547">Nucleotide-binding</keyword>
<keyword id="KW-1185">Reference proteome</keyword>
<sequence length="536" mass="57882">MNELGVHNPANGVAELGLGEASRVFYNLNESELYEHAIRNGEAELTIDGALRAVTGQHTGRSPKDKFVVRDASTENTIWWDNNKPLSPENFELLRQDMLAHAAGKTLYVQDLIGGADEENALPTRVVTELAWHSLFIRNLLIRPKRETLSGFSQKLTIINLPSFKADPARHGVRSETVIACDLTNGLVLIGGTSYAGENKKSVFTVLNYLLPAKGVMPMHCSANVGPEGDSAVFFGLSGTGKTTLSADPARTLIGDDEHGWGEHGIFNFEGGCYAKAIKLSSEAEPEIYAATNRFGTVLENVVLDESRVPDFNDNSLTENTRSAYPLHFIPNASETGIAGHPKTIIMLTADAFGVLPPIARLTPEQAMYHFLSGYTAKVAGTEKGVTEPEATFSTCFGAPFMPRHPAEYGNLLRELIGKHGVDCWLVNTGWTGGAYGIGKRMPIKATRALLTAALTGDLKNAQFRTDANFGFAVPLSLDGVDGAILDPRSTWADGAAYDAQAKKLVSMFVSNFTKFEDHVDSKVRDAAPGLLLAAE</sequence>
<dbReference type="EC" id="4.1.1.49" evidence="1"/>
<dbReference type="EMBL" id="AE007869">
    <property type="protein sequence ID" value="AAK85859.2"/>
    <property type="molecule type" value="Genomic_DNA"/>
</dbReference>
<dbReference type="PIR" id="AD2581">
    <property type="entry name" value="AD2581"/>
</dbReference>
<dbReference type="PIR" id="B97363">
    <property type="entry name" value="B97363"/>
</dbReference>
<dbReference type="RefSeq" id="NP_353074.2">
    <property type="nucleotide sequence ID" value="NC_003062.2"/>
</dbReference>
<dbReference type="RefSeq" id="WP_010970616.1">
    <property type="nucleotide sequence ID" value="NC_003062.2"/>
</dbReference>
<dbReference type="SMR" id="Q8UJ94"/>
<dbReference type="STRING" id="176299.Atu0035"/>
<dbReference type="EnsemblBacteria" id="AAK85859">
    <property type="protein sequence ID" value="AAK85859"/>
    <property type="gene ID" value="Atu0035"/>
</dbReference>
<dbReference type="GeneID" id="1132073"/>
<dbReference type="KEGG" id="atu:Atu0035"/>
<dbReference type="PATRIC" id="fig|176299.10.peg.35"/>
<dbReference type="eggNOG" id="COG1866">
    <property type="taxonomic scope" value="Bacteria"/>
</dbReference>
<dbReference type="HOGENOM" id="CLU_018247_0_1_5"/>
<dbReference type="OrthoDB" id="9806325at2"/>
<dbReference type="PhylomeDB" id="Q8UJ94"/>
<dbReference type="UniPathway" id="UPA00138"/>
<dbReference type="Proteomes" id="UP000000813">
    <property type="component" value="Chromosome circular"/>
</dbReference>
<dbReference type="GO" id="GO:0005829">
    <property type="term" value="C:cytosol"/>
    <property type="evidence" value="ECO:0007669"/>
    <property type="project" value="TreeGrafter"/>
</dbReference>
<dbReference type="GO" id="GO:0005524">
    <property type="term" value="F:ATP binding"/>
    <property type="evidence" value="ECO:0007669"/>
    <property type="project" value="UniProtKB-UniRule"/>
</dbReference>
<dbReference type="GO" id="GO:0046872">
    <property type="term" value="F:metal ion binding"/>
    <property type="evidence" value="ECO:0007669"/>
    <property type="project" value="UniProtKB-KW"/>
</dbReference>
<dbReference type="GO" id="GO:0004612">
    <property type="term" value="F:phosphoenolpyruvate carboxykinase (ATP) activity"/>
    <property type="evidence" value="ECO:0007669"/>
    <property type="project" value="UniProtKB-UniRule"/>
</dbReference>
<dbReference type="GO" id="GO:0006094">
    <property type="term" value="P:gluconeogenesis"/>
    <property type="evidence" value="ECO:0007669"/>
    <property type="project" value="UniProtKB-UniRule"/>
</dbReference>
<dbReference type="CDD" id="cd00484">
    <property type="entry name" value="PEPCK_ATP"/>
    <property type="match status" value="1"/>
</dbReference>
<dbReference type="Gene3D" id="3.90.228.20">
    <property type="match status" value="1"/>
</dbReference>
<dbReference type="Gene3D" id="3.40.449.10">
    <property type="entry name" value="Phosphoenolpyruvate Carboxykinase, domain 1"/>
    <property type="match status" value="1"/>
</dbReference>
<dbReference type="Gene3D" id="2.170.8.10">
    <property type="entry name" value="Phosphoenolpyruvate Carboxykinase, domain 2"/>
    <property type="match status" value="1"/>
</dbReference>
<dbReference type="HAMAP" id="MF_00453">
    <property type="entry name" value="PEPCK_ATP"/>
    <property type="match status" value="1"/>
</dbReference>
<dbReference type="InterPro" id="IPR001272">
    <property type="entry name" value="PEP_carboxykinase_ATP"/>
</dbReference>
<dbReference type="InterPro" id="IPR013035">
    <property type="entry name" value="PEP_carboxykinase_C"/>
</dbReference>
<dbReference type="InterPro" id="IPR008210">
    <property type="entry name" value="PEP_carboxykinase_N"/>
</dbReference>
<dbReference type="InterPro" id="IPR015994">
    <property type="entry name" value="PEPCK_ATP_CS"/>
</dbReference>
<dbReference type="NCBIfam" id="TIGR00224">
    <property type="entry name" value="pckA"/>
    <property type="match status" value="1"/>
</dbReference>
<dbReference type="NCBIfam" id="NF006820">
    <property type="entry name" value="PRK09344.1-2"/>
    <property type="match status" value="1"/>
</dbReference>
<dbReference type="NCBIfam" id="NF006821">
    <property type="entry name" value="PRK09344.1-3"/>
    <property type="match status" value="1"/>
</dbReference>
<dbReference type="NCBIfam" id="NF006822">
    <property type="entry name" value="PRK09344.1-4"/>
    <property type="match status" value="1"/>
</dbReference>
<dbReference type="PANTHER" id="PTHR30031:SF0">
    <property type="entry name" value="PHOSPHOENOLPYRUVATE CARBOXYKINASE (ATP)"/>
    <property type="match status" value="1"/>
</dbReference>
<dbReference type="PANTHER" id="PTHR30031">
    <property type="entry name" value="PHOSPHOENOLPYRUVATE CARBOXYKINASE ATP"/>
    <property type="match status" value="1"/>
</dbReference>
<dbReference type="Pfam" id="PF01293">
    <property type="entry name" value="PEPCK_ATP"/>
    <property type="match status" value="1"/>
</dbReference>
<dbReference type="PIRSF" id="PIRSF006294">
    <property type="entry name" value="PEP_crbxkin"/>
    <property type="match status" value="1"/>
</dbReference>
<dbReference type="SUPFAM" id="SSF68923">
    <property type="entry name" value="PEP carboxykinase N-terminal domain"/>
    <property type="match status" value="1"/>
</dbReference>
<dbReference type="SUPFAM" id="SSF53795">
    <property type="entry name" value="PEP carboxykinase-like"/>
    <property type="match status" value="1"/>
</dbReference>
<dbReference type="PROSITE" id="PS00532">
    <property type="entry name" value="PEPCK_ATP"/>
    <property type="match status" value="1"/>
</dbReference>
<name>PCKA_AGRFC</name>